<feature type="chain" id="PRO_1000130429" description="Ureidoglycolate lyase">
    <location>
        <begin position="1"/>
        <end position="160"/>
    </location>
</feature>
<reference key="1">
    <citation type="submission" date="2008-05" db="EMBL/GenBank/DDBJ databases">
        <title>Complete sequence of Shigella boydii serotype 18 strain BS512.</title>
        <authorList>
            <person name="Rasko D.A."/>
            <person name="Rosovitz M."/>
            <person name="Maurelli A.T."/>
            <person name="Myers G."/>
            <person name="Seshadri R."/>
            <person name="Cer R."/>
            <person name="Jiang L."/>
            <person name="Ravel J."/>
            <person name="Sebastian Y."/>
        </authorList>
    </citation>
    <scope>NUCLEOTIDE SEQUENCE [LARGE SCALE GENOMIC DNA]</scope>
    <source>
        <strain>CDC 3083-94 / BS512</strain>
    </source>
</reference>
<protein>
    <recommendedName>
        <fullName evidence="1">Ureidoglycolate lyase</fullName>
        <ecNumber evidence="1">4.3.2.3</ecNumber>
    </recommendedName>
    <alternativeName>
        <fullName evidence="1">Ureidoglycolatase</fullName>
    </alternativeName>
</protein>
<accession>B2TTA4</accession>
<gene>
    <name evidence="1" type="primary">allA</name>
    <name type="ordered locus">SbBS512_E0439</name>
</gene>
<name>ALLA_SHIB3</name>
<dbReference type="EC" id="4.3.2.3" evidence="1"/>
<dbReference type="EMBL" id="CP001063">
    <property type="protein sequence ID" value="ACD10265.1"/>
    <property type="molecule type" value="Genomic_DNA"/>
</dbReference>
<dbReference type="RefSeq" id="WP_000776388.1">
    <property type="nucleotide sequence ID" value="NC_010658.1"/>
</dbReference>
<dbReference type="SMR" id="B2TTA4"/>
<dbReference type="STRING" id="344609.SbBS512_E0439"/>
<dbReference type="GeneID" id="75202348"/>
<dbReference type="KEGG" id="sbc:SbBS512_E0439"/>
<dbReference type="HOGENOM" id="CLU_070848_1_1_6"/>
<dbReference type="UniPathway" id="UPA00395"/>
<dbReference type="Proteomes" id="UP000001030">
    <property type="component" value="Chromosome"/>
</dbReference>
<dbReference type="GO" id="GO:0004848">
    <property type="term" value="F:ureidoglycolate hydrolase activity"/>
    <property type="evidence" value="ECO:0007669"/>
    <property type="project" value="InterPro"/>
</dbReference>
<dbReference type="GO" id="GO:0050385">
    <property type="term" value="F:ureidoglycolate lyase activity"/>
    <property type="evidence" value="ECO:0007669"/>
    <property type="project" value="UniProtKB-UniRule"/>
</dbReference>
<dbReference type="GO" id="GO:0000256">
    <property type="term" value="P:allantoin catabolic process"/>
    <property type="evidence" value="ECO:0007669"/>
    <property type="project" value="UniProtKB-UniRule"/>
</dbReference>
<dbReference type="GO" id="GO:0006145">
    <property type="term" value="P:purine nucleobase catabolic process"/>
    <property type="evidence" value="ECO:0007669"/>
    <property type="project" value="UniProtKB-UniRule"/>
</dbReference>
<dbReference type="CDD" id="cd20298">
    <property type="entry name" value="cupin_UAH"/>
    <property type="match status" value="1"/>
</dbReference>
<dbReference type="FunFam" id="2.60.120.480:FF:000001">
    <property type="entry name" value="Ureidoglycolate lyase"/>
    <property type="match status" value="1"/>
</dbReference>
<dbReference type="Gene3D" id="2.60.120.480">
    <property type="entry name" value="Ureidoglycolate hydrolase"/>
    <property type="match status" value="1"/>
</dbReference>
<dbReference type="HAMAP" id="MF_00616">
    <property type="entry name" value="Ureidogly_lyase"/>
    <property type="match status" value="1"/>
</dbReference>
<dbReference type="InterPro" id="IPR011051">
    <property type="entry name" value="RmlC_Cupin_sf"/>
</dbReference>
<dbReference type="InterPro" id="IPR047233">
    <property type="entry name" value="UAH_cupin"/>
</dbReference>
<dbReference type="InterPro" id="IPR007247">
    <property type="entry name" value="Ureidogly_lyase"/>
</dbReference>
<dbReference type="InterPro" id="IPR023525">
    <property type="entry name" value="Ureidogly_lyase_bac"/>
</dbReference>
<dbReference type="InterPro" id="IPR024060">
    <property type="entry name" value="Ureidoglycolate_lyase_dom_sf"/>
</dbReference>
<dbReference type="NCBIfam" id="NF002948">
    <property type="entry name" value="PRK03606.1-1"/>
    <property type="match status" value="1"/>
</dbReference>
<dbReference type="NCBIfam" id="NF009932">
    <property type="entry name" value="PRK13395.1"/>
    <property type="match status" value="1"/>
</dbReference>
<dbReference type="PANTHER" id="PTHR21221">
    <property type="entry name" value="UREIDOGLYCOLATE HYDROLASE"/>
    <property type="match status" value="1"/>
</dbReference>
<dbReference type="PANTHER" id="PTHR21221:SF1">
    <property type="entry name" value="UREIDOGLYCOLATE LYASE"/>
    <property type="match status" value="1"/>
</dbReference>
<dbReference type="Pfam" id="PF04115">
    <property type="entry name" value="Ureidogly_lyase"/>
    <property type="match status" value="1"/>
</dbReference>
<dbReference type="PIRSF" id="PIRSF017306">
    <property type="entry name" value="Ureidogly_hydro"/>
    <property type="match status" value="1"/>
</dbReference>
<dbReference type="SUPFAM" id="SSF51182">
    <property type="entry name" value="RmlC-like cupins"/>
    <property type="match status" value="1"/>
</dbReference>
<organism>
    <name type="scientific">Shigella boydii serotype 18 (strain CDC 3083-94 / BS512)</name>
    <dbReference type="NCBI Taxonomy" id="344609"/>
    <lineage>
        <taxon>Bacteria</taxon>
        <taxon>Pseudomonadati</taxon>
        <taxon>Pseudomonadota</taxon>
        <taxon>Gammaproteobacteria</taxon>
        <taxon>Enterobacterales</taxon>
        <taxon>Enterobacteriaceae</taxon>
        <taxon>Shigella</taxon>
    </lineage>
</organism>
<evidence type="ECO:0000255" key="1">
    <source>
        <dbReference type="HAMAP-Rule" id="MF_00616"/>
    </source>
</evidence>
<comment type="function">
    <text evidence="1">Catalyzes the catabolism of the allantoin degradation intermediate (S)-ureidoglycolate, generating urea and glyoxylate. Involved in the anaerobic utilization of allantoin as sole nitrogen source. Reinforces the induction of genes involved in the degradation of allantoin and glyoxylate by producing glyoxylate.</text>
</comment>
<comment type="catalytic activity">
    <reaction evidence="1">
        <text>(S)-ureidoglycolate = urea + glyoxylate</text>
        <dbReference type="Rhea" id="RHEA:11304"/>
        <dbReference type="ChEBI" id="CHEBI:16199"/>
        <dbReference type="ChEBI" id="CHEBI:36655"/>
        <dbReference type="ChEBI" id="CHEBI:57296"/>
        <dbReference type="EC" id="4.3.2.3"/>
    </reaction>
</comment>
<comment type="cofactor">
    <cofactor evidence="1">
        <name>Ni(2+)</name>
        <dbReference type="ChEBI" id="CHEBI:49786"/>
    </cofactor>
</comment>
<comment type="pathway">
    <text evidence="1">Nitrogen metabolism; (S)-allantoin degradation.</text>
</comment>
<comment type="subunit">
    <text evidence="1">Homodimer.</text>
</comment>
<comment type="similarity">
    <text evidence="1">Belongs to the ureidoglycolate lyase family.</text>
</comment>
<keyword id="KW-0456">Lyase</keyword>
<keyword id="KW-0659">Purine metabolism</keyword>
<keyword id="KW-1185">Reference proteome</keyword>
<sequence>MKLQVLPLSQEAFSAYGDVIETQQRDFFHINNGLVERYHDLALVEILEQDRTLISINRAQPANLPLTIHELERHPLGTQAFIPMKGEVFVVVVALGDDKPDLSTLRAFITNGEQGVNYHRNVWHHPLFAWQRVTDFLTIDRGGSDNCDVESIPEQELCFA</sequence>
<proteinExistence type="inferred from homology"/>